<sequence length="558" mass="61774">MAELNTHVNVKEKIYAVRSVVPNKSNNEIVLVLQQFDFNVDKAVQAFVDGSAIQVLKEWSMTGKKKNNKRKRSKSKQHQGNKDAKDKGERPEVGPLQPQAPLVQNGHMNGCEKDSSSPDSAREKLALTPREKKISILEEPPRAQRGITEGSRLLQQKMSLDGNPKAIHGPSERSDGLQWSAGQPCNPSKPKAKTSPVKSNAPAAHLEIKPDELAKKRGPNIEKSVKDLQRCTVSLTRYRVMIKEEVDSSVKKIKAAFAELHNCIIDKEVSLMAEMDKVKEEAMDILTARQKKAEELKRLTDLASQMAEMQLAELRAEIKHFVSERKYDEELGKAARFSCDIEQLKAQILICGEITHPKNNYSSRTPCSSLLPLLNTHAVASGKQGNFSRKSSGHNKPNEGKAANPKMVSGLPSTADACQQTMPTNKQQNGPSNQRRRFNPQYHNRLNGPAKSQGSGNEADPMVKSNNRHEHRRQPHNGFRPKNKGGAKNQEAPLGTKAPEAPPHSEKARRRQHAADNLETRPFRGNVGRVSQCNLCPTRIEVSTEATVLSVPAVTLVA</sequence>
<gene>
    <name type="primary">Spats2l</name>
</gene>
<keyword id="KW-0007">Acetylation</keyword>
<keyword id="KW-0175">Coiled coil</keyword>
<keyword id="KW-0963">Cytoplasm</keyword>
<keyword id="KW-0539">Nucleus</keyword>
<keyword id="KW-0597">Phosphoprotein</keyword>
<keyword id="KW-1185">Reference proteome</keyword>
<name>SPS2L_RAT</name>
<proteinExistence type="evidence at transcript level"/>
<feature type="initiator methionine" description="Removed" evidence="2">
    <location>
        <position position="1"/>
    </location>
</feature>
<feature type="chain" id="PRO_0000307701" description="SPATS2-like protein">
    <location>
        <begin position="2"/>
        <end position="558"/>
    </location>
</feature>
<feature type="region of interest" description="Disordered" evidence="4">
    <location>
        <begin position="63"/>
        <end position="148"/>
    </location>
</feature>
<feature type="region of interest" description="Disordered" evidence="4">
    <location>
        <begin position="161"/>
        <end position="202"/>
    </location>
</feature>
<feature type="region of interest" description="Disordered" evidence="4">
    <location>
        <begin position="383"/>
        <end position="514"/>
    </location>
</feature>
<feature type="coiled-coil region" evidence="3">
    <location>
        <begin position="279"/>
        <end position="344"/>
    </location>
</feature>
<feature type="compositionally biased region" description="Basic residues" evidence="4">
    <location>
        <begin position="63"/>
        <end position="79"/>
    </location>
</feature>
<feature type="compositionally biased region" description="Basic and acidic residues" evidence="4">
    <location>
        <begin position="80"/>
        <end position="92"/>
    </location>
</feature>
<feature type="compositionally biased region" description="Basic and acidic residues" evidence="4">
    <location>
        <begin position="110"/>
        <end position="142"/>
    </location>
</feature>
<feature type="compositionally biased region" description="Polar residues" evidence="4">
    <location>
        <begin position="416"/>
        <end position="433"/>
    </location>
</feature>
<feature type="compositionally biased region" description="Basic residues" evidence="4">
    <location>
        <begin position="469"/>
        <end position="485"/>
    </location>
</feature>
<feature type="modified residue" description="N-acetylalanine" evidence="2">
    <location>
        <position position="2"/>
    </location>
</feature>
<feature type="modified residue" description="Phosphoserine" evidence="2">
    <location>
        <position position="120"/>
    </location>
</feature>
<feature type="modified residue" description="Phosphoserine" evidence="2">
    <location>
        <position position="455"/>
    </location>
</feature>
<reference key="1">
    <citation type="journal article" date="2004" name="Genome Res.">
        <title>The status, quality, and expansion of the NIH full-length cDNA project: the Mammalian Gene Collection (MGC).</title>
        <authorList>
            <consortium name="The MGC Project Team"/>
        </authorList>
    </citation>
    <scope>NUCLEOTIDE SEQUENCE [LARGE SCALE MRNA]</scope>
    <source>
        <tissue>Heart</tissue>
    </source>
</reference>
<accession>Q5U2T3</accession>
<organism>
    <name type="scientific">Rattus norvegicus</name>
    <name type="common">Rat</name>
    <dbReference type="NCBI Taxonomy" id="10116"/>
    <lineage>
        <taxon>Eukaryota</taxon>
        <taxon>Metazoa</taxon>
        <taxon>Chordata</taxon>
        <taxon>Craniata</taxon>
        <taxon>Vertebrata</taxon>
        <taxon>Euteleostomi</taxon>
        <taxon>Mammalia</taxon>
        <taxon>Eutheria</taxon>
        <taxon>Euarchontoglires</taxon>
        <taxon>Glires</taxon>
        <taxon>Rodentia</taxon>
        <taxon>Myomorpha</taxon>
        <taxon>Muroidea</taxon>
        <taxon>Muridae</taxon>
        <taxon>Murinae</taxon>
        <taxon>Rattus</taxon>
    </lineage>
</organism>
<dbReference type="EMBL" id="BC085874">
    <property type="protein sequence ID" value="AAH85874.1"/>
    <property type="molecule type" value="mRNA"/>
</dbReference>
<dbReference type="RefSeq" id="NP_001014124.1">
    <property type="nucleotide sequence ID" value="NM_001014102.1"/>
</dbReference>
<dbReference type="RefSeq" id="XP_008765330.1">
    <property type="nucleotide sequence ID" value="XM_008767108.2"/>
</dbReference>
<dbReference type="RefSeq" id="XP_008765331.1">
    <property type="nucleotide sequence ID" value="XM_008767109.2"/>
</dbReference>
<dbReference type="RefSeq" id="XP_008765332.1">
    <property type="nucleotide sequence ID" value="XM_008767110.3"/>
</dbReference>
<dbReference type="RefSeq" id="XP_038939557.1">
    <property type="nucleotide sequence ID" value="XM_039083629.2"/>
</dbReference>
<dbReference type="RefSeq" id="XP_063123270.1">
    <property type="nucleotide sequence ID" value="XM_063267200.1"/>
</dbReference>
<dbReference type="RefSeq" id="XP_063123271.1">
    <property type="nucleotide sequence ID" value="XM_063267201.1"/>
</dbReference>
<dbReference type="SMR" id="Q5U2T3"/>
<dbReference type="BioGRID" id="261345">
    <property type="interactions" value="1"/>
</dbReference>
<dbReference type="FunCoup" id="Q5U2T3">
    <property type="interactions" value="609"/>
</dbReference>
<dbReference type="IntAct" id="Q5U2T3">
    <property type="interactions" value="1"/>
</dbReference>
<dbReference type="STRING" id="10116.ENSRNOP00000069610"/>
<dbReference type="iPTMnet" id="Q5U2T3"/>
<dbReference type="PhosphoSitePlus" id="Q5U2T3"/>
<dbReference type="PaxDb" id="10116-ENSRNOP00000021527"/>
<dbReference type="GeneID" id="316426"/>
<dbReference type="KEGG" id="rno:316426"/>
<dbReference type="UCSC" id="RGD:1309930">
    <property type="organism name" value="rat"/>
</dbReference>
<dbReference type="AGR" id="RGD:1309930"/>
<dbReference type="CTD" id="26010"/>
<dbReference type="RGD" id="1309930">
    <property type="gene designation" value="Spats2l"/>
</dbReference>
<dbReference type="VEuPathDB" id="HostDB:ENSRNOG00000016012"/>
<dbReference type="eggNOG" id="ENOG502QY9Y">
    <property type="taxonomic scope" value="Eukaryota"/>
</dbReference>
<dbReference type="HOGENOM" id="CLU_037089_3_0_1"/>
<dbReference type="InParanoid" id="Q5U2T3"/>
<dbReference type="PhylomeDB" id="Q5U2T3"/>
<dbReference type="PRO" id="PR:Q5U2T3"/>
<dbReference type="Proteomes" id="UP000002494">
    <property type="component" value="Chromosome 9"/>
</dbReference>
<dbReference type="Bgee" id="ENSRNOG00000016012">
    <property type="expression patterns" value="Expressed in jejunum and 19 other cell types or tissues"/>
</dbReference>
<dbReference type="ExpressionAtlas" id="Q5U2T3">
    <property type="expression patterns" value="baseline and differential"/>
</dbReference>
<dbReference type="GO" id="GO:0005737">
    <property type="term" value="C:cytoplasm"/>
    <property type="evidence" value="ECO:0000318"/>
    <property type="project" value="GO_Central"/>
</dbReference>
<dbReference type="GO" id="GO:0005730">
    <property type="term" value="C:nucleolus"/>
    <property type="evidence" value="ECO:0007669"/>
    <property type="project" value="UniProtKB-SubCell"/>
</dbReference>
<dbReference type="InterPro" id="IPR009816">
    <property type="entry name" value="SPATS2-like"/>
</dbReference>
<dbReference type="InterPro" id="IPR009060">
    <property type="entry name" value="UBA-like_sf"/>
</dbReference>
<dbReference type="PANTHER" id="PTHR15623:SF8">
    <property type="entry name" value="SPATS2-LIKE PROTEIN"/>
    <property type="match status" value="1"/>
</dbReference>
<dbReference type="PANTHER" id="PTHR15623">
    <property type="entry name" value="SPERMATOGENESIS-ASSOCIATED SERINE-RICH PROTEIN 2-RELATED"/>
    <property type="match status" value="1"/>
</dbReference>
<dbReference type="Pfam" id="PF07139">
    <property type="entry name" value="SPATS2-like"/>
    <property type="match status" value="1"/>
</dbReference>
<dbReference type="SUPFAM" id="SSF46934">
    <property type="entry name" value="UBA-like"/>
    <property type="match status" value="1"/>
</dbReference>
<protein>
    <recommendedName>
        <fullName>SPATS2-like protein</fullName>
    </recommendedName>
</protein>
<evidence type="ECO:0000250" key="1"/>
<evidence type="ECO:0000250" key="2">
    <source>
        <dbReference type="UniProtKB" id="Q9NUQ6"/>
    </source>
</evidence>
<evidence type="ECO:0000255" key="3"/>
<evidence type="ECO:0000256" key="4">
    <source>
        <dbReference type="SAM" id="MobiDB-lite"/>
    </source>
</evidence>
<evidence type="ECO:0000305" key="5"/>
<comment type="subcellular location">
    <subcellularLocation>
        <location evidence="1">Cytoplasm</location>
    </subcellularLocation>
    <subcellularLocation>
        <location evidence="1">Nucleus</location>
        <location evidence="1">Nucleolus</location>
    </subcellularLocation>
</comment>
<comment type="similarity">
    <text evidence="5">Belongs to the SPATS2 family.</text>
</comment>